<comment type="function">
    <text evidence="1 5">Proton-coupled amino-acid transporter that transports free histidine and certain di- and tripeptides, and is involved in innate immune response (PubMed:24695226). Also able to transport carnosine (By similarity). Involved in the detection of microbial pathogens by toll-like receptors (TLRs) and NOD-like receptors (NLRs), probably by mediating transport of bacterial peptidoglycans across the endolysosomal membrane: catalyzes the transport of certain bacterial peptidoglycans, such as muramyl dipeptide (MDP), the NOD2 ligand (PubMed:24695226).</text>
</comment>
<comment type="catalytic activity">
    <reaction evidence="5">
        <text>N-acetyl-D-muramoyl-L-alanyl-D-isoglutamine(out) + n H(+)(out) = N-acetyl-D-muramoyl-L-alanyl-D-isoglutamine(in) + n H(+)(in)</text>
        <dbReference type="Rhea" id="RHEA:76371"/>
        <dbReference type="ChEBI" id="CHEBI:15378"/>
        <dbReference type="ChEBI" id="CHEBI:155830"/>
    </reaction>
    <physiologicalReaction direction="left-to-right" evidence="5">
        <dbReference type="Rhea" id="RHEA:76372"/>
    </physiologicalReaction>
</comment>
<comment type="catalytic activity">
    <reaction evidence="1">
        <text>glycylglycylglycine(out) + n H(+)(out) = glycylglycylglycine(in) + n H(+)(in)</text>
        <dbReference type="Rhea" id="RHEA:76391"/>
        <dbReference type="ChEBI" id="CHEBI:15378"/>
        <dbReference type="ChEBI" id="CHEBI:195214"/>
    </reaction>
    <physiologicalReaction direction="left-to-right" evidence="1">
        <dbReference type="Rhea" id="RHEA:76392"/>
    </physiologicalReaction>
</comment>
<comment type="catalytic activity">
    <reaction evidence="1">
        <text>carnosine(out) + n H(+)(out) = carnosine(in) + n H(+)(in)</text>
        <dbReference type="Rhea" id="RHEA:76383"/>
        <dbReference type="ChEBI" id="CHEBI:15378"/>
        <dbReference type="ChEBI" id="CHEBI:57485"/>
    </reaction>
    <physiologicalReaction direction="left-to-right" evidence="1">
        <dbReference type="Rhea" id="RHEA:76384"/>
    </physiologicalReaction>
</comment>
<comment type="catalytic activity">
    <reaction evidence="1">
        <text>L-histidine(out) + n H(+)(out) = L-histidine(in) + n H(+)(in)</text>
        <dbReference type="Rhea" id="RHEA:76379"/>
        <dbReference type="ChEBI" id="CHEBI:15378"/>
        <dbReference type="ChEBI" id="CHEBI:57595"/>
    </reaction>
    <physiologicalReaction direction="left-to-right" evidence="1">
        <dbReference type="Rhea" id="RHEA:76380"/>
    </physiologicalReaction>
</comment>
<comment type="subcellular location">
    <subcellularLocation>
        <location evidence="5">Lysosome membrane</location>
        <topology evidence="2">Multi-pass membrane protein</topology>
    </subcellularLocation>
    <subcellularLocation>
        <location evidence="5">Endosome membrane</location>
        <topology evidence="2">Multi-pass membrane protein</topology>
    </subcellularLocation>
</comment>
<comment type="tissue specificity">
    <text evidence="4 5">Expressed highly in bone marrow derived macrophages, and weakly in spleen and lung (PubMed:11004510). Expressed in plasmacytoid dendritic cells (pDCs) in response to toll-like receptors (TLR) stimulation (PubMed:24695226).</text>
</comment>
<comment type="similarity">
    <text evidence="8">Belongs to the major facilitator superfamily. Proton-dependent oligopeptide transporter (POT/PTR) (TC 2.A.17) family.</text>
</comment>
<evidence type="ECO:0000250" key="1">
    <source>
        <dbReference type="UniProtKB" id="Q8IY34"/>
    </source>
</evidence>
<evidence type="ECO:0000255" key="2"/>
<evidence type="ECO:0000256" key="3">
    <source>
        <dbReference type="SAM" id="MobiDB-lite"/>
    </source>
</evidence>
<evidence type="ECO:0000269" key="4">
    <source>
    </source>
</evidence>
<evidence type="ECO:0000269" key="5">
    <source>
    </source>
</evidence>
<evidence type="ECO:0000303" key="6">
    <source>
    </source>
</evidence>
<evidence type="ECO:0000303" key="7">
    <source>
    </source>
</evidence>
<evidence type="ECO:0000305" key="8"/>
<evidence type="ECO:0000312" key="9">
    <source>
        <dbReference type="MGI" id="MGI:1929691"/>
    </source>
</evidence>
<protein>
    <recommendedName>
        <fullName evidence="8">Solute carrier family 15 member 3</fullName>
    </recommendedName>
    <alternativeName>
        <fullName evidence="1">Peptide transporter 3</fullName>
    </alternativeName>
    <alternativeName>
        <fullName evidence="1">Peptide/histidine transporter 2</fullName>
    </alternativeName>
    <alternativeName>
        <fullName evidence="6">cAMP-inducible gene 1 protein</fullName>
    </alternativeName>
</protein>
<name>S15A3_MOUSE</name>
<keyword id="KW-0002">3D-structure</keyword>
<keyword id="KW-0967">Endosome</keyword>
<keyword id="KW-0325">Glycoprotein</keyword>
<keyword id="KW-0391">Immunity</keyword>
<keyword id="KW-0399">Innate immunity</keyword>
<keyword id="KW-0458">Lysosome</keyword>
<keyword id="KW-0472">Membrane</keyword>
<keyword id="KW-0571">Peptide transport</keyword>
<keyword id="KW-0653">Protein transport</keyword>
<keyword id="KW-1185">Reference proteome</keyword>
<keyword id="KW-0769">Symport</keyword>
<keyword id="KW-0812">Transmembrane</keyword>
<keyword id="KW-1133">Transmembrane helix</keyword>
<keyword id="KW-0813">Transport</keyword>
<dbReference type="EMBL" id="AF121080">
    <property type="protein sequence ID" value="AAD24570.1"/>
    <property type="molecule type" value="mRNA"/>
</dbReference>
<dbReference type="EMBL" id="AK051941">
    <property type="protein sequence ID" value="BAC34816.1"/>
    <property type="molecule type" value="mRNA"/>
</dbReference>
<dbReference type="EMBL" id="BC051940">
    <property type="protein sequence ID" value="AAH51940.1"/>
    <property type="molecule type" value="mRNA"/>
</dbReference>
<dbReference type="CCDS" id="CCDS29588.1"/>
<dbReference type="RefSeq" id="NP_075531.2">
    <property type="nucleotide sequence ID" value="NM_023044.2"/>
</dbReference>
<dbReference type="PDB" id="8WX1">
    <property type="method" value="EM"/>
    <property type="resolution" value="3.64 A"/>
    <property type="chains" value="A=1-578"/>
</dbReference>
<dbReference type="PDBsum" id="8WX1"/>
<dbReference type="EMDB" id="EMD-37897"/>
<dbReference type="SMR" id="Q8BPX9"/>
<dbReference type="BioGRID" id="211140">
    <property type="interactions" value="3"/>
</dbReference>
<dbReference type="FunCoup" id="Q8BPX9">
    <property type="interactions" value="93"/>
</dbReference>
<dbReference type="STRING" id="10090.ENSMUSP00000025646"/>
<dbReference type="GlyCosmos" id="Q8BPX9">
    <property type="glycosylation" value="3 sites, No reported glycans"/>
</dbReference>
<dbReference type="GlyGen" id="Q8BPX9">
    <property type="glycosylation" value="3 sites, 2 N-linked glycans (2 sites)"/>
</dbReference>
<dbReference type="iPTMnet" id="Q8BPX9"/>
<dbReference type="PhosphoSitePlus" id="Q8BPX9"/>
<dbReference type="SwissPalm" id="Q8BPX9"/>
<dbReference type="jPOST" id="Q8BPX9"/>
<dbReference type="PaxDb" id="10090-ENSMUSP00000025646"/>
<dbReference type="PeptideAtlas" id="Q8BPX9"/>
<dbReference type="ProteomicsDB" id="260969"/>
<dbReference type="Antibodypedia" id="50766">
    <property type="antibodies" value="96 antibodies from 16 providers"/>
</dbReference>
<dbReference type="DNASU" id="65221"/>
<dbReference type="Ensembl" id="ENSMUST00000025646.3">
    <property type="protein sequence ID" value="ENSMUSP00000025646.3"/>
    <property type="gene ID" value="ENSMUSG00000024737.3"/>
</dbReference>
<dbReference type="GeneID" id="65221"/>
<dbReference type="KEGG" id="mmu:65221"/>
<dbReference type="UCSC" id="uc008gra.2">
    <property type="organism name" value="mouse"/>
</dbReference>
<dbReference type="AGR" id="MGI:1929691"/>
<dbReference type="CTD" id="51296"/>
<dbReference type="MGI" id="MGI:1929691">
    <property type="gene designation" value="Slc15a3"/>
</dbReference>
<dbReference type="VEuPathDB" id="HostDB:ENSMUSG00000024737"/>
<dbReference type="eggNOG" id="KOG1237">
    <property type="taxonomic scope" value="Eukaryota"/>
</dbReference>
<dbReference type="GeneTree" id="ENSGT00940000161889"/>
<dbReference type="HOGENOM" id="CLU_009313_6_1_1"/>
<dbReference type="InParanoid" id="Q8BPX9"/>
<dbReference type="OMA" id="WMHGAEG"/>
<dbReference type="OrthoDB" id="8904098at2759"/>
<dbReference type="PhylomeDB" id="Q8BPX9"/>
<dbReference type="TreeFam" id="TF330897"/>
<dbReference type="Reactome" id="R-MMU-427975">
    <property type="pathway name" value="Proton/oligopeptide cotransporters"/>
</dbReference>
<dbReference type="BioGRID-ORCS" id="65221">
    <property type="hits" value="2 hits in 79 CRISPR screens"/>
</dbReference>
<dbReference type="PRO" id="PR:Q8BPX9"/>
<dbReference type="Proteomes" id="UP000000589">
    <property type="component" value="Chromosome 19"/>
</dbReference>
<dbReference type="RNAct" id="Q8BPX9">
    <property type="molecule type" value="protein"/>
</dbReference>
<dbReference type="Bgee" id="ENSMUSG00000024737">
    <property type="expression patterns" value="Expressed in granulocyte and 75 other cell types or tissues"/>
</dbReference>
<dbReference type="GO" id="GO:0010008">
    <property type="term" value="C:endosome membrane"/>
    <property type="evidence" value="ECO:0000314"/>
    <property type="project" value="UniProtKB"/>
</dbReference>
<dbReference type="GO" id="GO:0005765">
    <property type="term" value="C:lysosomal membrane"/>
    <property type="evidence" value="ECO:0000314"/>
    <property type="project" value="UniProtKB"/>
</dbReference>
<dbReference type="GO" id="GO:0071916">
    <property type="term" value="F:dipeptide transmembrane transporter activity"/>
    <property type="evidence" value="ECO:0000250"/>
    <property type="project" value="UniProtKB"/>
</dbReference>
<dbReference type="GO" id="GO:0015647">
    <property type="term" value="F:peptidoglycan transmembrane transporter activity"/>
    <property type="evidence" value="ECO:0000314"/>
    <property type="project" value="UniProtKB"/>
</dbReference>
<dbReference type="GO" id="GO:0015293">
    <property type="term" value="F:symporter activity"/>
    <property type="evidence" value="ECO:0007669"/>
    <property type="project" value="UniProtKB-KW"/>
</dbReference>
<dbReference type="GO" id="GO:0140206">
    <property type="term" value="P:dipeptide import across plasma membrane"/>
    <property type="evidence" value="ECO:0000250"/>
    <property type="project" value="UniProtKB"/>
</dbReference>
<dbReference type="GO" id="GO:0045087">
    <property type="term" value="P:innate immune response"/>
    <property type="evidence" value="ECO:0007669"/>
    <property type="project" value="UniProtKB-KW"/>
</dbReference>
<dbReference type="GO" id="GO:0015835">
    <property type="term" value="P:peptidoglycan transport"/>
    <property type="evidence" value="ECO:0000314"/>
    <property type="project" value="UniProtKB"/>
</dbReference>
<dbReference type="GO" id="GO:0070434">
    <property type="term" value="P:positive regulation of nucleotide-binding oligomerization domain containing 2 signaling pathway"/>
    <property type="evidence" value="ECO:0000314"/>
    <property type="project" value="UniProtKB"/>
</dbReference>
<dbReference type="GO" id="GO:0015031">
    <property type="term" value="P:protein transport"/>
    <property type="evidence" value="ECO:0007669"/>
    <property type="project" value="UniProtKB-KW"/>
</dbReference>
<dbReference type="FunFam" id="1.20.1250.20:FF:000307">
    <property type="entry name" value="Solute carrier family 15 member 3"/>
    <property type="match status" value="1"/>
</dbReference>
<dbReference type="Gene3D" id="1.20.1250.20">
    <property type="entry name" value="MFS general substrate transporter like domains"/>
    <property type="match status" value="1"/>
</dbReference>
<dbReference type="InterPro" id="IPR036259">
    <property type="entry name" value="MFS_trans_sf"/>
</dbReference>
<dbReference type="InterPro" id="IPR000109">
    <property type="entry name" value="POT_fam"/>
</dbReference>
<dbReference type="InterPro" id="IPR018456">
    <property type="entry name" value="PTR2_symporter_CS"/>
</dbReference>
<dbReference type="PANTHER" id="PTHR11654">
    <property type="entry name" value="OLIGOPEPTIDE TRANSPORTER-RELATED"/>
    <property type="match status" value="1"/>
</dbReference>
<dbReference type="Pfam" id="PF00854">
    <property type="entry name" value="PTR2"/>
    <property type="match status" value="1"/>
</dbReference>
<dbReference type="SUPFAM" id="SSF103473">
    <property type="entry name" value="MFS general substrate transporter"/>
    <property type="match status" value="1"/>
</dbReference>
<dbReference type="PROSITE" id="PS01023">
    <property type="entry name" value="PTR2_2"/>
    <property type="match status" value="1"/>
</dbReference>
<sequence length="578" mass="64051">MSAPRAEEQPSRSGERQPLVARGPRGPRRWRRTAAAAVLLVQMLERAAFFGVTSNLVLYLNSLNFNWDGQQASRATLLFLGASYLLAPVGGWLADVYLGRFLTISLSLLLYLAASGLLLTTITNDGRRSFCGEMPELPLEPACPSSSCQGSWSSPYCATTLYLVLLLLALAASSVRSTLTSFGADQVMDLGRDATRRFFNWFYWSINLGAILSLLVVAFIEQNISFLWGYSIIVGLVGLAFFIFLFATPVFITKPPTGSQVSSMLKLAFQNCCPCRRSSSRDSESAHLLPDQRSNQPGPSPQEDMANFQVLVKILPVMVTLVPYWMVYFQMQSTYVLQGLHLHIPNIFRTNPNISLLLRSDSSNYRIPEAWLLLANVAVILILIPVKDHLIDPLLLRCKLLPSSLQKMALGMFFGFTSIIVAGVLEKERLQYIAANQTVPQLIGKDLYYAAPLSIWWQIPQYLLIGVSEIFASIPGLEFAYSEAPRSMQGAIMGIFFCLSGVGSLLGSGLVALLSFPGGWMYCPKDFGNINNCQMDRYFFLLAGIEAVTAVLFLWIAGRYERTRQDPASQRSSSRVRG</sequence>
<reference key="1">
    <citation type="journal article" date="2000" name="Biochim. Biophys. Acta">
        <title>Identification of cAMP analogue inducible genes in RAW264 macrophages.</title>
        <authorList>
            <person name="Takahashi Y."/>
            <person name="Miyata M."/>
            <person name="Zheng P."/>
            <person name="Imazato T."/>
            <person name="Horwitz A."/>
            <person name="Smith J.D."/>
        </authorList>
    </citation>
    <scope>NUCLEOTIDE SEQUENCE [MRNA]</scope>
    <scope>TISSUE SPECIFICITY</scope>
</reference>
<reference key="2">
    <citation type="journal article" date="2005" name="Science">
        <title>The transcriptional landscape of the mammalian genome.</title>
        <authorList>
            <person name="Carninci P."/>
            <person name="Kasukawa T."/>
            <person name="Katayama S."/>
            <person name="Gough J."/>
            <person name="Frith M.C."/>
            <person name="Maeda N."/>
            <person name="Oyama R."/>
            <person name="Ravasi T."/>
            <person name="Lenhard B."/>
            <person name="Wells C."/>
            <person name="Kodzius R."/>
            <person name="Shimokawa K."/>
            <person name="Bajic V.B."/>
            <person name="Brenner S.E."/>
            <person name="Batalov S."/>
            <person name="Forrest A.R."/>
            <person name="Zavolan M."/>
            <person name="Davis M.J."/>
            <person name="Wilming L.G."/>
            <person name="Aidinis V."/>
            <person name="Allen J.E."/>
            <person name="Ambesi-Impiombato A."/>
            <person name="Apweiler R."/>
            <person name="Aturaliya R.N."/>
            <person name="Bailey T.L."/>
            <person name="Bansal M."/>
            <person name="Baxter L."/>
            <person name="Beisel K.W."/>
            <person name="Bersano T."/>
            <person name="Bono H."/>
            <person name="Chalk A.M."/>
            <person name="Chiu K.P."/>
            <person name="Choudhary V."/>
            <person name="Christoffels A."/>
            <person name="Clutterbuck D.R."/>
            <person name="Crowe M.L."/>
            <person name="Dalla E."/>
            <person name="Dalrymple B.P."/>
            <person name="de Bono B."/>
            <person name="Della Gatta G."/>
            <person name="di Bernardo D."/>
            <person name="Down T."/>
            <person name="Engstrom P."/>
            <person name="Fagiolini M."/>
            <person name="Faulkner G."/>
            <person name="Fletcher C.F."/>
            <person name="Fukushima T."/>
            <person name="Furuno M."/>
            <person name="Futaki S."/>
            <person name="Gariboldi M."/>
            <person name="Georgii-Hemming P."/>
            <person name="Gingeras T.R."/>
            <person name="Gojobori T."/>
            <person name="Green R.E."/>
            <person name="Gustincich S."/>
            <person name="Harbers M."/>
            <person name="Hayashi Y."/>
            <person name="Hensch T.K."/>
            <person name="Hirokawa N."/>
            <person name="Hill D."/>
            <person name="Huminiecki L."/>
            <person name="Iacono M."/>
            <person name="Ikeo K."/>
            <person name="Iwama A."/>
            <person name="Ishikawa T."/>
            <person name="Jakt M."/>
            <person name="Kanapin A."/>
            <person name="Katoh M."/>
            <person name="Kawasawa Y."/>
            <person name="Kelso J."/>
            <person name="Kitamura H."/>
            <person name="Kitano H."/>
            <person name="Kollias G."/>
            <person name="Krishnan S.P."/>
            <person name="Kruger A."/>
            <person name="Kummerfeld S.K."/>
            <person name="Kurochkin I.V."/>
            <person name="Lareau L.F."/>
            <person name="Lazarevic D."/>
            <person name="Lipovich L."/>
            <person name="Liu J."/>
            <person name="Liuni S."/>
            <person name="McWilliam S."/>
            <person name="Madan Babu M."/>
            <person name="Madera M."/>
            <person name="Marchionni L."/>
            <person name="Matsuda H."/>
            <person name="Matsuzawa S."/>
            <person name="Miki H."/>
            <person name="Mignone F."/>
            <person name="Miyake S."/>
            <person name="Morris K."/>
            <person name="Mottagui-Tabar S."/>
            <person name="Mulder N."/>
            <person name="Nakano N."/>
            <person name="Nakauchi H."/>
            <person name="Ng P."/>
            <person name="Nilsson R."/>
            <person name="Nishiguchi S."/>
            <person name="Nishikawa S."/>
            <person name="Nori F."/>
            <person name="Ohara O."/>
            <person name="Okazaki Y."/>
            <person name="Orlando V."/>
            <person name="Pang K.C."/>
            <person name="Pavan W.J."/>
            <person name="Pavesi G."/>
            <person name="Pesole G."/>
            <person name="Petrovsky N."/>
            <person name="Piazza S."/>
            <person name="Reed J."/>
            <person name="Reid J.F."/>
            <person name="Ring B.Z."/>
            <person name="Ringwald M."/>
            <person name="Rost B."/>
            <person name="Ruan Y."/>
            <person name="Salzberg S.L."/>
            <person name="Sandelin A."/>
            <person name="Schneider C."/>
            <person name="Schoenbach C."/>
            <person name="Sekiguchi K."/>
            <person name="Semple C.A."/>
            <person name="Seno S."/>
            <person name="Sessa L."/>
            <person name="Sheng Y."/>
            <person name="Shibata Y."/>
            <person name="Shimada H."/>
            <person name="Shimada K."/>
            <person name="Silva D."/>
            <person name="Sinclair B."/>
            <person name="Sperling S."/>
            <person name="Stupka E."/>
            <person name="Sugiura K."/>
            <person name="Sultana R."/>
            <person name="Takenaka Y."/>
            <person name="Taki K."/>
            <person name="Tammoja K."/>
            <person name="Tan S.L."/>
            <person name="Tang S."/>
            <person name="Taylor M.S."/>
            <person name="Tegner J."/>
            <person name="Teichmann S.A."/>
            <person name="Ueda H.R."/>
            <person name="van Nimwegen E."/>
            <person name="Verardo R."/>
            <person name="Wei C.L."/>
            <person name="Yagi K."/>
            <person name="Yamanishi H."/>
            <person name="Zabarovsky E."/>
            <person name="Zhu S."/>
            <person name="Zimmer A."/>
            <person name="Hide W."/>
            <person name="Bult C."/>
            <person name="Grimmond S.M."/>
            <person name="Teasdale R.D."/>
            <person name="Liu E.T."/>
            <person name="Brusic V."/>
            <person name="Quackenbush J."/>
            <person name="Wahlestedt C."/>
            <person name="Mattick J.S."/>
            <person name="Hume D.A."/>
            <person name="Kai C."/>
            <person name="Sasaki D."/>
            <person name="Tomaru Y."/>
            <person name="Fukuda S."/>
            <person name="Kanamori-Katayama M."/>
            <person name="Suzuki M."/>
            <person name="Aoki J."/>
            <person name="Arakawa T."/>
            <person name="Iida J."/>
            <person name="Imamura K."/>
            <person name="Itoh M."/>
            <person name="Kato T."/>
            <person name="Kawaji H."/>
            <person name="Kawagashira N."/>
            <person name="Kawashima T."/>
            <person name="Kojima M."/>
            <person name="Kondo S."/>
            <person name="Konno H."/>
            <person name="Nakano K."/>
            <person name="Ninomiya N."/>
            <person name="Nishio T."/>
            <person name="Okada M."/>
            <person name="Plessy C."/>
            <person name="Shibata K."/>
            <person name="Shiraki T."/>
            <person name="Suzuki S."/>
            <person name="Tagami M."/>
            <person name="Waki K."/>
            <person name="Watahiki A."/>
            <person name="Okamura-Oho Y."/>
            <person name="Suzuki H."/>
            <person name="Kawai J."/>
            <person name="Hayashizaki Y."/>
        </authorList>
    </citation>
    <scope>NUCLEOTIDE SEQUENCE [LARGE SCALE MRNA]</scope>
    <source>
        <strain>C57BL/6J</strain>
        <tissue>Eye</tissue>
    </source>
</reference>
<reference key="3">
    <citation type="journal article" date="2004" name="Genome Res.">
        <title>The status, quality, and expansion of the NIH full-length cDNA project: the Mammalian Gene Collection (MGC).</title>
        <authorList>
            <consortium name="The MGC Project Team"/>
        </authorList>
    </citation>
    <scope>NUCLEOTIDE SEQUENCE [LARGE SCALE MRNA]</scope>
    <source>
        <strain>C57BL/6J</strain>
        <tissue>Brain</tissue>
    </source>
</reference>
<reference key="4">
    <citation type="journal article" date="2014" name="Nature">
        <title>Endosomes are specialized platforms for bacterial sensing and NOD2 signalling.</title>
        <authorList>
            <person name="Nakamura N."/>
            <person name="Lill J.R."/>
            <person name="Phung Q."/>
            <person name="Jiang Z."/>
            <person name="Bakalarski C."/>
            <person name="de Maziere A."/>
            <person name="Klumperman J."/>
            <person name="Schlatter M."/>
            <person name="Delamarre L."/>
            <person name="Mellman I."/>
        </authorList>
    </citation>
    <scope>FUNCTION</scope>
    <scope>TRANSPORTER ACTIVITY</scope>
    <scope>SUBCELLULAR LOCATION</scope>
</reference>
<accession>Q8BPX9</accession>
<accession>Q9WU80</accession>
<proteinExistence type="evidence at protein level"/>
<feature type="chain" id="PRO_0000295913" description="Solute carrier family 15 member 3">
    <location>
        <begin position="1"/>
        <end position="578"/>
    </location>
</feature>
<feature type="transmembrane region" description="Helical" evidence="2">
    <location>
        <begin position="33"/>
        <end position="53"/>
    </location>
</feature>
<feature type="transmembrane region" description="Helical" evidence="2">
    <location>
        <begin position="77"/>
        <end position="97"/>
    </location>
</feature>
<feature type="transmembrane region" description="Helical" evidence="2">
    <location>
        <begin position="102"/>
        <end position="122"/>
    </location>
</feature>
<feature type="transmembrane region" description="Helical" evidence="2">
    <location>
        <begin position="155"/>
        <end position="175"/>
    </location>
</feature>
<feature type="transmembrane region" description="Helical" evidence="2">
    <location>
        <begin position="201"/>
        <end position="221"/>
    </location>
</feature>
<feature type="transmembrane region" description="Helical" evidence="2">
    <location>
        <begin position="232"/>
        <end position="252"/>
    </location>
</feature>
<feature type="transmembrane region" description="Helical" evidence="2">
    <location>
        <begin position="308"/>
        <end position="328"/>
    </location>
</feature>
<feature type="transmembrane region" description="Helical" evidence="2">
    <location>
        <begin position="367"/>
        <end position="387"/>
    </location>
</feature>
<feature type="transmembrane region" description="Helical" evidence="2">
    <location>
        <begin position="405"/>
        <end position="425"/>
    </location>
</feature>
<feature type="transmembrane region" description="Helical" evidence="2">
    <location>
        <begin position="462"/>
        <end position="481"/>
    </location>
</feature>
<feature type="transmembrane region" description="Helical" evidence="2">
    <location>
        <begin position="494"/>
        <end position="514"/>
    </location>
</feature>
<feature type="transmembrane region" description="Helical" evidence="2">
    <location>
        <begin position="538"/>
        <end position="558"/>
    </location>
</feature>
<feature type="region of interest" description="Disordered" evidence="3">
    <location>
        <begin position="1"/>
        <end position="27"/>
    </location>
</feature>
<feature type="region of interest" description="Disordered" evidence="3">
    <location>
        <begin position="280"/>
        <end position="301"/>
    </location>
</feature>
<feature type="compositionally biased region" description="Basic and acidic residues" evidence="3">
    <location>
        <begin position="1"/>
        <end position="15"/>
    </location>
</feature>
<feature type="glycosylation site" description="N-linked (GlcNAc...) asparagine" evidence="2">
    <location>
        <position position="223"/>
    </location>
</feature>
<feature type="glycosylation site" description="N-linked (GlcNAc...) asparagine" evidence="2">
    <location>
        <position position="353"/>
    </location>
</feature>
<feature type="glycosylation site" description="N-linked (GlcNAc...) asparagine" evidence="2">
    <location>
        <position position="436"/>
    </location>
</feature>
<feature type="sequence conflict" description="In Ref. 1; AAD24570." evidence="8" ref="1">
    <original>R</original>
    <variation>K</variation>
    <location>
        <position position="277"/>
    </location>
</feature>
<gene>
    <name evidence="7 9" type="primary">Slc15a3</name>
    <name evidence="6" type="synonym">Ci1</name>
    <name evidence="1" type="synonym">Pht2</name>
</gene>
<organism>
    <name type="scientific">Mus musculus</name>
    <name type="common">Mouse</name>
    <dbReference type="NCBI Taxonomy" id="10090"/>
    <lineage>
        <taxon>Eukaryota</taxon>
        <taxon>Metazoa</taxon>
        <taxon>Chordata</taxon>
        <taxon>Craniata</taxon>
        <taxon>Vertebrata</taxon>
        <taxon>Euteleostomi</taxon>
        <taxon>Mammalia</taxon>
        <taxon>Eutheria</taxon>
        <taxon>Euarchontoglires</taxon>
        <taxon>Glires</taxon>
        <taxon>Rodentia</taxon>
        <taxon>Myomorpha</taxon>
        <taxon>Muroidea</taxon>
        <taxon>Muridae</taxon>
        <taxon>Murinae</taxon>
        <taxon>Mus</taxon>
        <taxon>Mus</taxon>
    </lineage>
</organism>